<protein>
    <recommendedName>
        <fullName>Long polar fimbria protein A</fullName>
    </recommendedName>
</protein>
<sequence>MEFLMKKVVFALSALAVVSTSAFAAESGDGTIKFTGEIVDAPCVVSTDSQNQEVVLGQVKKNIFKAIGDKSSSKPFQIKLEDCDITSNTKVNVSFNGVGDTDDATLVSVNTEAGAATGVGIGIYDNANKLVEMNTGKSTTTLAAGQTVLYYTANYVATKDTVTTGYGNAEVDFNLSYE</sequence>
<comment type="subcellular location">
    <subcellularLocation>
        <location evidence="2">Fimbrium</location>
    </subcellularLocation>
</comment>
<comment type="similarity">
    <text evidence="2">Belongs to the fimbrial protein family.</text>
</comment>
<accession>P43660</accession>
<dbReference type="EMBL" id="U18559">
    <property type="protein sequence ID" value="AAA73966.1"/>
    <property type="molecule type" value="Genomic_DNA"/>
</dbReference>
<dbReference type="EMBL" id="AE006468">
    <property type="protein sequence ID" value="AAL22500.1"/>
    <property type="molecule type" value="Genomic_DNA"/>
</dbReference>
<dbReference type="PIR" id="A56271">
    <property type="entry name" value="A56271"/>
</dbReference>
<dbReference type="RefSeq" id="NP_462541.1">
    <property type="nucleotide sequence ID" value="NC_003197.2"/>
</dbReference>
<dbReference type="RefSeq" id="WP_000395013.1">
    <property type="nucleotide sequence ID" value="NC_003197.2"/>
</dbReference>
<dbReference type="SMR" id="P43660"/>
<dbReference type="STRING" id="99287.STM3640"/>
<dbReference type="PaxDb" id="99287-STM3640"/>
<dbReference type="GeneID" id="1255164"/>
<dbReference type="KEGG" id="stm:STM3640"/>
<dbReference type="PATRIC" id="fig|99287.12.peg.3849"/>
<dbReference type="HOGENOM" id="CLU_088965_0_0_6"/>
<dbReference type="OMA" id="TGYGNAQ"/>
<dbReference type="PhylomeDB" id="P43660"/>
<dbReference type="BioCyc" id="SENT99287:STM3640-MONOMER"/>
<dbReference type="Proteomes" id="UP000001014">
    <property type="component" value="Chromosome"/>
</dbReference>
<dbReference type="GO" id="GO:0009289">
    <property type="term" value="C:pilus"/>
    <property type="evidence" value="ECO:0000318"/>
    <property type="project" value="GO_Central"/>
</dbReference>
<dbReference type="GO" id="GO:0043709">
    <property type="term" value="P:cell adhesion involved in single-species biofilm formation"/>
    <property type="evidence" value="ECO:0000318"/>
    <property type="project" value="GO_Central"/>
</dbReference>
<dbReference type="FunFam" id="2.60.40.1090:FF:000001">
    <property type="entry name" value="Type-1 fimbrial major subunit"/>
    <property type="match status" value="1"/>
</dbReference>
<dbReference type="Gene3D" id="2.60.40.1090">
    <property type="entry name" value="Fimbrial-type adhesion domain"/>
    <property type="match status" value="1"/>
</dbReference>
<dbReference type="InterPro" id="IPR000259">
    <property type="entry name" value="Adhesion_dom_fimbrial"/>
</dbReference>
<dbReference type="InterPro" id="IPR036937">
    <property type="entry name" value="Adhesion_dom_fimbrial_sf"/>
</dbReference>
<dbReference type="InterPro" id="IPR008966">
    <property type="entry name" value="Adhesion_dom_sf"/>
</dbReference>
<dbReference type="InterPro" id="IPR050263">
    <property type="entry name" value="Bact_Fimbrial_Adh_Pro"/>
</dbReference>
<dbReference type="NCBIfam" id="NF011756">
    <property type="entry name" value="PRK15209.1"/>
    <property type="match status" value="1"/>
</dbReference>
<dbReference type="PANTHER" id="PTHR33420">
    <property type="entry name" value="FIMBRIAL SUBUNIT ELFA-RELATED"/>
    <property type="match status" value="1"/>
</dbReference>
<dbReference type="PANTHER" id="PTHR33420:SF12">
    <property type="entry name" value="FIMBRIN-LIKE PROTEIN FIMI-RELATED"/>
    <property type="match status" value="1"/>
</dbReference>
<dbReference type="Pfam" id="PF00419">
    <property type="entry name" value="Fimbrial"/>
    <property type="match status" value="1"/>
</dbReference>
<dbReference type="SUPFAM" id="SSF49401">
    <property type="entry name" value="Bacterial adhesins"/>
    <property type="match status" value="1"/>
</dbReference>
<keyword id="KW-0281">Fimbrium</keyword>
<keyword id="KW-1185">Reference proteome</keyword>
<keyword id="KW-0732">Signal</keyword>
<proteinExistence type="inferred from homology"/>
<organism>
    <name type="scientific">Salmonella typhimurium (strain LT2 / SGSC1412 / ATCC 700720)</name>
    <dbReference type="NCBI Taxonomy" id="99287"/>
    <lineage>
        <taxon>Bacteria</taxon>
        <taxon>Pseudomonadati</taxon>
        <taxon>Pseudomonadota</taxon>
        <taxon>Gammaproteobacteria</taxon>
        <taxon>Enterobacterales</taxon>
        <taxon>Enterobacteriaceae</taxon>
        <taxon>Salmonella</taxon>
    </lineage>
</organism>
<feature type="signal peptide" evidence="1">
    <location>
        <begin position="1"/>
        <end position="24"/>
    </location>
</feature>
<feature type="chain" id="PRO_0000009228" description="Long polar fimbria protein A">
    <location>
        <begin position="25"/>
        <end position="178"/>
    </location>
</feature>
<name>LPFA_SALTY</name>
<gene>
    <name type="primary">lpfA</name>
    <name type="ordered locus">STM3640</name>
</gene>
<evidence type="ECO:0000255" key="1"/>
<evidence type="ECO:0000305" key="2"/>
<reference key="1">
    <citation type="journal article" date="1995" name="J. Bacteriol.">
        <title>Identification and sequence analysis of lpfABCDE, a putative fimbrial operon of Salmonella typhimurium.</title>
        <authorList>
            <person name="Baeumler A.J."/>
            <person name="Heffron F."/>
        </authorList>
    </citation>
    <scope>NUCLEOTIDE SEQUENCE [GENOMIC DNA]</scope>
    <source>
        <strain>ATCC 14028 / SGSG 2980 / CDC 6516-60 / NCTC 12023</strain>
    </source>
</reference>
<reference key="2">
    <citation type="journal article" date="2001" name="Nature">
        <title>Complete genome sequence of Salmonella enterica serovar Typhimurium LT2.</title>
        <authorList>
            <person name="McClelland M."/>
            <person name="Sanderson K.E."/>
            <person name="Spieth J."/>
            <person name="Clifton S.W."/>
            <person name="Latreille P."/>
            <person name="Courtney L."/>
            <person name="Porwollik S."/>
            <person name="Ali J."/>
            <person name="Dante M."/>
            <person name="Du F."/>
            <person name="Hou S."/>
            <person name="Layman D."/>
            <person name="Leonard S."/>
            <person name="Nguyen C."/>
            <person name="Scott K."/>
            <person name="Holmes A."/>
            <person name="Grewal N."/>
            <person name="Mulvaney E."/>
            <person name="Ryan E."/>
            <person name="Sun H."/>
            <person name="Florea L."/>
            <person name="Miller W."/>
            <person name="Stoneking T."/>
            <person name="Nhan M."/>
            <person name="Waterston R."/>
            <person name="Wilson R.K."/>
        </authorList>
    </citation>
    <scope>NUCLEOTIDE SEQUENCE [LARGE SCALE GENOMIC DNA]</scope>
    <source>
        <strain>LT2 / SGSC1412 / ATCC 700720</strain>
    </source>
</reference>